<dbReference type="EC" id="2.3.1.275" evidence="1"/>
<dbReference type="EMBL" id="AE007869">
    <property type="protein sequence ID" value="AAK87097.2"/>
    <property type="status" value="ALT_INIT"/>
    <property type="molecule type" value="Genomic_DNA"/>
</dbReference>
<dbReference type="PIR" id="AB2737">
    <property type="entry name" value="AB2737"/>
</dbReference>
<dbReference type="PIR" id="H97517">
    <property type="entry name" value="H97517"/>
</dbReference>
<dbReference type="RefSeq" id="NP_354312.2">
    <property type="nucleotide sequence ID" value="NC_003062.2"/>
</dbReference>
<dbReference type="RefSeq" id="WP_035256563.1">
    <property type="nucleotide sequence ID" value="NC_003062.2"/>
</dbReference>
<dbReference type="SMR" id="Q8UFU1"/>
<dbReference type="STRING" id="176299.Atu1306"/>
<dbReference type="EnsemblBacteria" id="AAK87097">
    <property type="protein sequence ID" value="AAK87097"/>
    <property type="gene ID" value="Atu1306"/>
</dbReference>
<dbReference type="GeneID" id="1133344"/>
<dbReference type="KEGG" id="atu:Atu1306"/>
<dbReference type="PATRIC" id="fig|176299.10.peg.1321"/>
<dbReference type="eggNOG" id="COG0344">
    <property type="taxonomic scope" value="Bacteria"/>
</dbReference>
<dbReference type="HOGENOM" id="CLU_081254_1_0_5"/>
<dbReference type="OrthoDB" id="9777124at2"/>
<dbReference type="UniPathway" id="UPA00085"/>
<dbReference type="Proteomes" id="UP000000813">
    <property type="component" value="Chromosome circular"/>
</dbReference>
<dbReference type="GO" id="GO:0005886">
    <property type="term" value="C:plasma membrane"/>
    <property type="evidence" value="ECO:0007669"/>
    <property type="project" value="UniProtKB-SubCell"/>
</dbReference>
<dbReference type="GO" id="GO:0043772">
    <property type="term" value="F:acyl-phosphate glycerol-3-phosphate acyltransferase activity"/>
    <property type="evidence" value="ECO:0007669"/>
    <property type="project" value="UniProtKB-UniRule"/>
</dbReference>
<dbReference type="GO" id="GO:0008654">
    <property type="term" value="P:phospholipid biosynthetic process"/>
    <property type="evidence" value="ECO:0007669"/>
    <property type="project" value="UniProtKB-UniRule"/>
</dbReference>
<dbReference type="HAMAP" id="MF_01043">
    <property type="entry name" value="PlsY"/>
    <property type="match status" value="1"/>
</dbReference>
<dbReference type="InterPro" id="IPR003811">
    <property type="entry name" value="G3P_acylTferase_PlsY"/>
</dbReference>
<dbReference type="NCBIfam" id="TIGR00023">
    <property type="entry name" value="glycerol-3-phosphate 1-O-acyltransferase PlsY"/>
    <property type="match status" value="1"/>
</dbReference>
<dbReference type="PANTHER" id="PTHR30309:SF0">
    <property type="entry name" value="GLYCEROL-3-PHOSPHATE ACYLTRANSFERASE-RELATED"/>
    <property type="match status" value="1"/>
</dbReference>
<dbReference type="PANTHER" id="PTHR30309">
    <property type="entry name" value="INNER MEMBRANE PROTEIN YGIH"/>
    <property type="match status" value="1"/>
</dbReference>
<dbReference type="Pfam" id="PF02660">
    <property type="entry name" value="G3P_acyltransf"/>
    <property type="match status" value="1"/>
</dbReference>
<dbReference type="SMART" id="SM01207">
    <property type="entry name" value="G3P_acyltransf"/>
    <property type="match status" value="1"/>
</dbReference>
<organism>
    <name type="scientific">Agrobacterium fabrum (strain C58 / ATCC 33970)</name>
    <name type="common">Agrobacterium tumefaciens (strain C58)</name>
    <dbReference type="NCBI Taxonomy" id="176299"/>
    <lineage>
        <taxon>Bacteria</taxon>
        <taxon>Pseudomonadati</taxon>
        <taxon>Pseudomonadota</taxon>
        <taxon>Alphaproteobacteria</taxon>
        <taxon>Hyphomicrobiales</taxon>
        <taxon>Rhizobiaceae</taxon>
        <taxon>Rhizobium/Agrobacterium group</taxon>
        <taxon>Agrobacterium</taxon>
        <taxon>Agrobacterium tumefaciens complex</taxon>
    </lineage>
</organism>
<evidence type="ECO:0000255" key="1">
    <source>
        <dbReference type="HAMAP-Rule" id="MF_01043"/>
    </source>
</evidence>
<evidence type="ECO:0000305" key="2"/>
<protein>
    <recommendedName>
        <fullName evidence="1">Glycerol-3-phosphate acyltransferase</fullName>
    </recommendedName>
    <alternativeName>
        <fullName evidence="1">Acyl-PO4 G3P acyltransferase</fullName>
    </alternativeName>
    <alternativeName>
        <fullName evidence="1">Acyl-phosphate--glycerol-3-phosphate acyltransferase</fullName>
    </alternativeName>
    <alternativeName>
        <fullName evidence="1">G3P acyltransferase</fullName>
        <shortName evidence="1">GPAT</shortName>
        <ecNumber evidence="1">2.3.1.275</ecNumber>
    </alternativeName>
    <alternativeName>
        <fullName evidence="1">Lysophosphatidic acid synthase</fullName>
        <shortName evidence="1">LPA synthase</shortName>
    </alternativeName>
</protein>
<name>PLSY_AGRFC</name>
<accession>Q8UFU1</accession>
<comment type="function">
    <text evidence="1">Catalyzes the transfer of an acyl group from acyl-phosphate (acyl-PO(4)) to glycerol-3-phosphate (G3P) to form lysophosphatidic acid (LPA). This enzyme utilizes acyl-phosphate as fatty acyl donor, but not acyl-CoA or acyl-ACP.</text>
</comment>
<comment type="catalytic activity">
    <reaction evidence="1">
        <text>an acyl phosphate + sn-glycerol 3-phosphate = a 1-acyl-sn-glycero-3-phosphate + phosphate</text>
        <dbReference type="Rhea" id="RHEA:34075"/>
        <dbReference type="ChEBI" id="CHEBI:43474"/>
        <dbReference type="ChEBI" id="CHEBI:57597"/>
        <dbReference type="ChEBI" id="CHEBI:57970"/>
        <dbReference type="ChEBI" id="CHEBI:59918"/>
        <dbReference type="EC" id="2.3.1.275"/>
    </reaction>
</comment>
<comment type="pathway">
    <text evidence="1">Lipid metabolism; phospholipid metabolism.</text>
</comment>
<comment type="subunit">
    <text evidence="1">Probably interacts with PlsX.</text>
</comment>
<comment type="subcellular location">
    <subcellularLocation>
        <location evidence="1">Cell inner membrane</location>
        <topology evidence="1">Multi-pass membrane protein</topology>
    </subcellularLocation>
</comment>
<comment type="similarity">
    <text evidence="1">Belongs to the PlsY family.</text>
</comment>
<comment type="sequence caution" evidence="2">
    <conflict type="erroneous initiation">
        <sequence resource="EMBL-CDS" id="AAK87097"/>
    </conflict>
</comment>
<feature type="chain" id="PRO_0000188309" description="Glycerol-3-phosphate acyltransferase">
    <location>
        <begin position="1"/>
        <end position="205"/>
    </location>
</feature>
<feature type="transmembrane region" description="Helical" evidence="1">
    <location>
        <begin position="13"/>
        <end position="33"/>
    </location>
</feature>
<feature type="transmembrane region" description="Helical" evidence="1">
    <location>
        <begin position="68"/>
        <end position="88"/>
    </location>
</feature>
<feature type="transmembrane region" description="Helical" evidence="1">
    <location>
        <begin position="90"/>
        <end position="110"/>
    </location>
</feature>
<feature type="transmembrane region" description="Helical" evidence="1">
    <location>
        <begin position="120"/>
        <end position="140"/>
    </location>
</feature>
<feature type="transmembrane region" description="Helical" evidence="1">
    <location>
        <begin position="147"/>
        <end position="167"/>
    </location>
</feature>
<proteinExistence type="inferred from homology"/>
<gene>
    <name evidence="1" type="primary">plsY</name>
    <name type="ordered locus">Atu1306</name>
    <name type="ORF">AGR_C_2402</name>
</gene>
<sequence>MSALTDWQTAPALLALAALIGYLLGSIPFGLILTRMAGLGDVRKIGSGNIGATNVLRTGNKKLAAATLLLDALKGTAAVLVANALWGYEASLVAGFFAFLGHLFPVWLGFKGGKGVAVYIGVLLGAAPLMMLAFALIWLATAFITRYSSLSALLAMLIIPVALWVLGPEKTAMLVTLLSVISWWKHRENIRRLMAGTESRIGQKG</sequence>
<keyword id="KW-0997">Cell inner membrane</keyword>
<keyword id="KW-1003">Cell membrane</keyword>
<keyword id="KW-0444">Lipid biosynthesis</keyword>
<keyword id="KW-0443">Lipid metabolism</keyword>
<keyword id="KW-0472">Membrane</keyword>
<keyword id="KW-0594">Phospholipid biosynthesis</keyword>
<keyword id="KW-1208">Phospholipid metabolism</keyword>
<keyword id="KW-1185">Reference proteome</keyword>
<keyword id="KW-0808">Transferase</keyword>
<keyword id="KW-0812">Transmembrane</keyword>
<keyword id="KW-1133">Transmembrane helix</keyword>
<reference key="1">
    <citation type="journal article" date="2001" name="Science">
        <title>The genome of the natural genetic engineer Agrobacterium tumefaciens C58.</title>
        <authorList>
            <person name="Wood D.W."/>
            <person name="Setubal J.C."/>
            <person name="Kaul R."/>
            <person name="Monks D.E."/>
            <person name="Kitajima J.P."/>
            <person name="Okura V.K."/>
            <person name="Zhou Y."/>
            <person name="Chen L."/>
            <person name="Wood G.E."/>
            <person name="Almeida N.F. Jr."/>
            <person name="Woo L."/>
            <person name="Chen Y."/>
            <person name="Paulsen I.T."/>
            <person name="Eisen J.A."/>
            <person name="Karp P.D."/>
            <person name="Bovee D. Sr."/>
            <person name="Chapman P."/>
            <person name="Clendenning J."/>
            <person name="Deatherage G."/>
            <person name="Gillet W."/>
            <person name="Grant C."/>
            <person name="Kutyavin T."/>
            <person name="Levy R."/>
            <person name="Li M.-J."/>
            <person name="McClelland E."/>
            <person name="Palmieri A."/>
            <person name="Raymond C."/>
            <person name="Rouse G."/>
            <person name="Saenphimmachak C."/>
            <person name="Wu Z."/>
            <person name="Romero P."/>
            <person name="Gordon D."/>
            <person name="Zhang S."/>
            <person name="Yoo H."/>
            <person name="Tao Y."/>
            <person name="Biddle P."/>
            <person name="Jung M."/>
            <person name="Krespan W."/>
            <person name="Perry M."/>
            <person name="Gordon-Kamm B."/>
            <person name="Liao L."/>
            <person name="Kim S."/>
            <person name="Hendrick C."/>
            <person name="Zhao Z.-Y."/>
            <person name="Dolan M."/>
            <person name="Chumley F."/>
            <person name="Tingey S.V."/>
            <person name="Tomb J.-F."/>
            <person name="Gordon M.P."/>
            <person name="Olson M.V."/>
            <person name="Nester E.W."/>
        </authorList>
    </citation>
    <scope>NUCLEOTIDE SEQUENCE [LARGE SCALE GENOMIC DNA]</scope>
    <source>
        <strain>C58 / ATCC 33970</strain>
    </source>
</reference>
<reference key="2">
    <citation type="journal article" date="2001" name="Science">
        <title>Genome sequence of the plant pathogen and biotechnology agent Agrobacterium tumefaciens C58.</title>
        <authorList>
            <person name="Goodner B."/>
            <person name="Hinkle G."/>
            <person name="Gattung S."/>
            <person name="Miller N."/>
            <person name="Blanchard M."/>
            <person name="Qurollo B."/>
            <person name="Goldman B.S."/>
            <person name="Cao Y."/>
            <person name="Askenazi M."/>
            <person name="Halling C."/>
            <person name="Mullin L."/>
            <person name="Houmiel K."/>
            <person name="Gordon J."/>
            <person name="Vaudin M."/>
            <person name="Iartchouk O."/>
            <person name="Epp A."/>
            <person name="Liu F."/>
            <person name="Wollam C."/>
            <person name="Allinger M."/>
            <person name="Doughty D."/>
            <person name="Scott C."/>
            <person name="Lappas C."/>
            <person name="Markelz B."/>
            <person name="Flanagan C."/>
            <person name="Crowell C."/>
            <person name="Gurson J."/>
            <person name="Lomo C."/>
            <person name="Sear C."/>
            <person name="Strub G."/>
            <person name="Cielo C."/>
            <person name="Slater S."/>
        </authorList>
    </citation>
    <scope>NUCLEOTIDE SEQUENCE [LARGE SCALE GENOMIC DNA]</scope>
    <source>
        <strain>C58 / ATCC 33970</strain>
    </source>
</reference>